<evidence type="ECO:0000255" key="1">
    <source>
        <dbReference type="HAMAP-Rule" id="MF_00152"/>
    </source>
</evidence>
<evidence type="ECO:0000305" key="2"/>
<evidence type="ECO:0007829" key="3">
    <source>
        <dbReference type="PDB" id="1QTW"/>
    </source>
</evidence>
<evidence type="ECO:0007829" key="4">
    <source>
        <dbReference type="PDB" id="1QUM"/>
    </source>
</evidence>
<evidence type="ECO:0007829" key="5">
    <source>
        <dbReference type="PDB" id="4K1G"/>
    </source>
</evidence>
<gene>
    <name type="primary">nfo</name>
    <name type="ordered locus">b2159</name>
    <name type="ordered locus">JW2146</name>
</gene>
<organism>
    <name type="scientific">Escherichia coli (strain K12)</name>
    <dbReference type="NCBI Taxonomy" id="83333"/>
    <lineage>
        <taxon>Bacteria</taxon>
        <taxon>Pseudomonadati</taxon>
        <taxon>Pseudomonadota</taxon>
        <taxon>Gammaproteobacteria</taxon>
        <taxon>Enterobacterales</taxon>
        <taxon>Enterobacteriaceae</taxon>
        <taxon>Escherichia</taxon>
    </lineage>
</organism>
<proteinExistence type="evidence at protein level"/>
<keyword id="KW-0002">3D-structure</keyword>
<keyword id="KW-0227">DNA damage</keyword>
<keyword id="KW-0234">DNA repair</keyword>
<keyword id="KW-0255">Endonuclease</keyword>
<keyword id="KW-0378">Hydrolase</keyword>
<keyword id="KW-0464">Manganese</keyword>
<keyword id="KW-0479">Metal-binding</keyword>
<keyword id="KW-0540">Nuclease</keyword>
<keyword id="KW-1185">Reference proteome</keyword>
<keyword id="KW-0862">Zinc</keyword>
<comment type="function">
    <text>Endonuclease IV plays a role in DNA repair. It cleaves phosphodiester bonds at apurinic or apyrimidinic (AP) sites, generating a 3'-hydroxyl group and a 5'-terminal sugar phosphate. It preferentially attacks modified AP sites created by bleomycin and neocarzinostatin.</text>
</comment>
<comment type="catalytic activity">
    <reaction>
        <text>Endonucleolytic cleavage to 5'-phosphooligonucleotide end-products.</text>
        <dbReference type="EC" id="3.1.21.2"/>
    </reaction>
</comment>
<comment type="cofactor">
    <cofactor>
        <name>Zn(2+)</name>
        <dbReference type="ChEBI" id="CHEBI:29105"/>
    </cofactor>
    <cofactor>
        <name>Mn(2+)</name>
        <dbReference type="ChEBI" id="CHEBI:29035"/>
    </cofactor>
    <text>Binds 3 Zn(2+) ions. Can also bind Mn(2+) ions.</text>
</comment>
<comment type="subunit">
    <text>Monomer.</text>
</comment>
<comment type="induction">
    <text>Endonuclease IV is induced by agents which generate superoxide radical anions.</text>
</comment>
<comment type="similarity">
    <text evidence="1 2">Belongs to the AP endonuclease 2 family.</text>
</comment>
<accession>P0A6C1</accession>
<accession>P12638</accession>
<accession>P78086</accession>
<accession>Q2MAS0</accession>
<sequence>MKYIGAHVSAAGGLANAAIRAAEIDATAFALFTKNQRQWRAAPLTTQTIDEFKAACEKYHYTSAQILPHDSYLINLGHPVTEALEKSRDAFIDEMQRCEQLGLSLLNFHPGSHLMQISEEDCLARIAESINIALDKTQGVTAVIENTAGQGSNLGFKFEHLAAIIDGVEDKSRVGVCIDTCHAFAAGYDLRTPAECEKTFADFARTVGFKYLRGMHLNDAKSTFGSRVDRHHSLGEGNIGHDAFRWIMQDDRFDGIPLILETINPDIWAEEIAWLKAQQTEKAVA</sequence>
<reference key="1">
    <citation type="journal article" date="1988" name="J. Bacteriol.">
        <title>Nucleotide sequence of the nfo gene of Escherichia coli K-12.</title>
        <authorList>
            <person name="Saporito S.M."/>
            <person name="Cunningham R.P."/>
        </authorList>
    </citation>
    <scope>NUCLEOTIDE SEQUENCE [GENOMIC DNA]</scope>
    <source>
        <strain>K12</strain>
    </source>
</reference>
<reference key="2">
    <citation type="submission" date="1993-10" db="EMBL/GenBank/DDBJ databases">
        <title>Automated multiplex sequencing of the E.coli genome.</title>
        <authorList>
            <person name="Richterich P."/>
            <person name="Lakey N."/>
            <person name="Gryan G."/>
            <person name="Jaehn L."/>
            <person name="Mintz L."/>
            <person name="Robison K."/>
            <person name="Church G.M."/>
        </authorList>
    </citation>
    <scope>NUCLEOTIDE SEQUENCE [LARGE SCALE GENOMIC DNA]</scope>
    <source>
        <strain>K12 / BHB2600</strain>
    </source>
</reference>
<reference key="3">
    <citation type="journal article" date="1997" name="Science">
        <title>The complete genome sequence of Escherichia coli K-12.</title>
        <authorList>
            <person name="Blattner F.R."/>
            <person name="Plunkett G. III"/>
            <person name="Bloch C.A."/>
            <person name="Perna N.T."/>
            <person name="Burland V."/>
            <person name="Riley M."/>
            <person name="Collado-Vides J."/>
            <person name="Glasner J.D."/>
            <person name="Rode C.K."/>
            <person name="Mayhew G.F."/>
            <person name="Gregor J."/>
            <person name="Davis N.W."/>
            <person name="Kirkpatrick H.A."/>
            <person name="Goeden M.A."/>
            <person name="Rose D.J."/>
            <person name="Mau B."/>
            <person name="Shao Y."/>
        </authorList>
    </citation>
    <scope>NUCLEOTIDE SEQUENCE [LARGE SCALE GENOMIC DNA]</scope>
    <source>
        <strain>K12 / MG1655 / ATCC 47076</strain>
    </source>
</reference>
<reference key="4">
    <citation type="journal article" date="2006" name="Mol. Syst. Biol.">
        <title>Highly accurate genome sequences of Escherichia coli K-12 strains MG1655 and W3110.</title>
        <authorList>
            <person name="Hayashi K."/>
            <person name="Morooka N."/>
            <person name="Yamamoto Y."/>
            <person name="Fujita K."/>
            <person name="Isono K."/>
            <person name="Choi S."/>
            <person name="Ohtsubo E."/>
            <person name="Baba T."/>
            <person name="Wanner B.L."/>
            <person name="Mori H."/>
            <person name="Horiuchi T."/>
        </authorList>
    </citation>
    <scope>NUCLEOTIDE SEQUENCE [LARGE SCALE GENOMIC DNA]</scope>
    <source>
        <strain>K12 / W3110 / ATCC 27325 / DSM 5911</strain>
    </source>
</reference>
<reference key="5">
    <citation type="journal article" date="1991" name="J. Biol. Chem.">
        <title>Metalloenzymes in DNA repair. Escherichia coli endonuclease IV and Saccharomyces cerevisiae Apn1.</title>
        <authorList>
            <person name="Levin J.D."/>
            <person name="Shapiro R."/>
            <person name="Demple B."/>
        </authorList>
    </citation>
    <scope>METAL-BINDING STUDIES</scope>
</reference>
<reference key="6">
    <citation type="journal article" date="1999" name="Cell">
        <title>Structure of the DNA repair enzyme endonuclease IV and its DNA complex: double-nucleotide flipping at abasic sites and three-metal-ion catalysis.</title>
        <authorList>
            <person name="Hosfield D.J."/>
            <person name="Guan Y."/>
            <person name="Haas B.J."/>
            <person name="Cunningham R.P."/>
            <person name="Tainer J.A."/>
        </authorList>
    </citation>
    <scope>X-RAY CRYSTALLOGRAPHY (1.02 ANGSTROMS)</scope>
</reference>
<protein>
    <recommendedName>
        <fullName>Endonuclease 4</fullName>
        <ecNumber>3.1.21.2</ecNumber>
    </recommendedName>
    <alternativeName>
        <fullName>Endodeoxyribonuclease IV</fullName>
    </alternativeName>
    <alternativeName>
        <fullName>Endonuclease IV</fullName>
    </alternativeName>
</protein>
<name>END4_ECOLI</name>
<feature type="chain" id="PRO_0000190838" description="Endonuclease 4">
    <location>
        <begin position="1"/>
        <end position="285"/>
    </location>
</feature>
<feature type="binding site">
    <location>
        <position position="69"/>
    </location>
    <ligand>
        <name>Zn(2+)</name>
        <dbReference type="ChEBI" id="CHEBI:29105"/>
        <label>1</label>
    </ligand>
</feature>
<feature type="binding site">
    <location>
        <position position="109"/>
    </location>
    <ligand>
        <name>Zn(2+)</name>
        <dbReference type="ChEBI" id="CHEBI:29105"/>
        <label>1</label>
    </ligand>
</feature>
<feature type="binding site">
    <location>
        <position position="145"/>
    </location>
    <ligand>
        <name>Zn(2+)</name>
        <dbReference type="ChEBI" id="CHEBI:29105"/>
        <label>1</label>
    </ligand>
</feature>
<feature type="binding site">
    <location>
        <position position="145"/>
    </location>
    <ligand>
        <name>Zn(2+)</name>
        <dbReference type="ChEBI" id="CHEBI:29105"/>
        <label>2</label>
    </ligand>
</feature>
<feature type="binding site">
    <location>
        <position position="179"/>
    </location>
    <ligand>
        <name>Zn(2+)</name>
        <dbReference type="ChEBI" id="CHEBI:29105"/>
        <label>2</label>
    </ligand>
</feature>
<feature type="binding site">
    <location>
        <position position="182"/>
    </location>
    <ligand>
        <name>Zn(2+)</name>
        <dbReference type="ChEBI" id="CHEBI:29105"/>
        <label>3</label>
    </ligand>
</feature>
<feature type="binding site">
    <location>
        <position position="216"/>
    </location>
    <ligand>
        <name>Zn(2+)</name>
        <dbReference type="ChEBI" id="CHEBI:29105"/>
        <label>2</label>
    </ligand>
</feature>
<feature type="binding site">
    <location>
        <position position="229"/>
    </location>
    <ligand>
        <name>Zn(2+)</name>
        <dbReference type="ChEBI" id="CHEBI:29105"/>
        <label>3</label>
    </ligand>
</feature>
<feature type="binding site">
    <location>
        <position position="231"/>
    </location>
    <ligand>
        <name>Zn(2+)</name>
        <dbReference type="ChEBI" id="CHEBI:29105"/>
        <label>3</label>
    </ligand>
</feature>
<feature type="binding site">
    <location>
        <position position="261"/>
    </location>
    <ligand>
        <name>Zn(2+)</name>
        <dbReference type="ChEBI" id="CHEBI:29105"/>
        <label>2</label>
    </ligand>
</feature>
<feature type="sequence conflict" description="In Ref. 1; AAA24216." evidence="2" ref="1">
    <original>A</original>
    <variation>R</variation>
    <location>
        <position position="10"/>
    </location>
</feature>
<feature type="sequence conflict" description="In Ref. 2; AAA60529." evidence="2" ref="2">
    <original>A</original>
    <variation>T</variation>
    <location>
        <position position="273"/>
    </location>
</feature>
<feature type="strand" evidence="3">
    <location>
        <begin position="3"/>
        <end position="7"/>
    </location>
</feature>
<feature type="helix" evidence="3">
    <location>
        <begin position="14"/>
        <end position="23"/>
    </location>
</feature>
<feature type="strand" evidence="3">
    <location>
        <begin position="27"/>
        <end position="30"/>
    </location>
</feature>
<feature type="strand" evidence="5">
    <location>
        <begin position="32"/>
        <end position="34"/>
    </location>
</feature>
<feature type="helix" evidence="3">
    <location>
        <begin position="46"/>
        <end position="58"/>
    </location>
</feature>
<feature type="helix" evidence="3">
    <location>
        <begin position="63"/>
        <end position="65"/>
    </location>
</feature>
<feature type="strand" evidence="4">
    <location>
        <begin position="66"/>
        <end position="69"/>
    </location>
</feature>
<feature type="helix" evidence="3">
    <location>
        <begin position="81"/>
        <end position="100"/>
    </location>
</feature>
<feature type="strand" evidence="3">
    <location>
        <begin position="105"/>
        <end position="108"/>
    </location>
</feature>
<feature type="turn" evidence="3">
    <location>
        <begin position="114"/>
        <end position="116"/>
    </location>
</feature>
<feature type="helix" evidence="3">
    <location>
        <begin position="119"/>
        <end position="136"/>
    </location>
</feature>
<feature type="strand" evidence="3">
    <location>
        <begin position="141"/>
        <end position="145"/>
    </location>
</feature>
<feature type="helix" evidence="3">
    <location>
        <begin position="158"/>
        <end position="167"/>
    </location>
</feature>
<feature type="helix" evidence="3">
    <location>
        <begin position="171"/>
        <end position="173"/>
    </location>
</feature>
<feature type="strand" evidence="3">
    <location>
        <begin position="174"/>
        <end position="179"/>
    </location>
</feature>
<feature type="helix" evidence="3">
    <location>
        <begin position="180"/>
        <end position="186"/>
    </location>
</feature>
<feature type="helix" evidence="3">
    <location>
        <begin position="193"/>
        <end position="206"/>
    </location>
</feature>
<feature type="helix" evidence="3">
    <location>
        <begin position="209"/>
        <end position="211"/>
    </location>
</feature>
<feature type="strand" evidence="3">
    <location>
        <begin position="212"/>
        <end position="217"/>
    </location>
</feature>
<feature type="strand" evidence="3">
    <location>
        <begin position="219"/>
        <end position="222"/>
    </location>
</feature>
<feature type="turn" evidence="3">
    <location>
        <begin position="234"/>
        <end position="236"/>
    </location>
</feature>
<feature type="strand" evidence="3">
    <location>
        <begin position="237"/>
        <end position="239"/>
    </location>
</feature>
<feature type="helix" evidence="3">
    <location>
        <begin position="242"/>
        <end position="248"/>
    </location>
</feature>
<feature type="helix" evidence="3">
    <location>
        <begin position="251"/>
        <end position="253"/>
    </location>
</feature>
<feature type="strand" evidence="3">
    <location>
        <begin position="256"/>
        <end position="260"/>
    </location>
</feature>
<feature type="helix" evidence="3">
    <location>
        <begin position="265"/>
        <end position="267"/>
    </location>
</feature>
<feature type="helix" evidence="3">
    <location>
        <begin position="268"/>
        <end position="278"/>
    </location>
</feature>
<dbReference type="EC" id="3.1.21.2"/>
<dbReference type="EMBL" id="M22591">
    <property type="protein sequence ID" value="AAA24216.1"/>
    <property type="molecule type" value="Genomic_DNA"/>
</dbReference>
<dbReference type="EMBL" id="U00007">
    <property type="protein sequence ID" value="AAA60529.1"/>
    <property type="molecule type" value="Genomic_DNA"/>
</dbReference>
<dbReference type="EMBL" id="U00096">
    <property type="protein sequence ID" value="AAC75220.1"/>
    <property type="molecule type" value="Genomic_DNA"/>
</dbReference>
<dbReference type="EMBL" id="AP009048">
    <property type="protein sequence ID" value="BAE76636.1"/>
    <property type="molecule type" value="Genomic_DNA"/>
</dbReference>
<dbReference type="PIR" id="F64984">
    <property type="entry name" value="NDEC4"/>
</dbReference>
<dbReference type="RefSeq" id="NP_416664.1">
    <property type="nucleotide sequence ID" value="NC_000913.3"/>
</dbReference>
<dbReference type="RefSeq" id="WP_000873894.1">
    <property type="nucleotide sequence ID" value="NZ_LN832404.1"/>
</dbReference>
<dbReference type="PDB" id="1QTW">
    <property type="method" value="X-ray"/>
    <property type="resolution" value="1.02 A"/>
    <property type="chains" value="A=1-285"/>
</dbReference>
<dbReference type="PDB" id="1QUM">
    <property type="method" value="X-ray"/>
    <property type="resolution" value="1.55 A"/>
    <property type="chains" value="A=1-285"/>
</dbReference>
<dbReference type="PDB" id="2NQ9">
    <property type="method" value="X-ray"/>
    <property type="resolution" value="1.45 A"/>
    <property type="chains" value="A=1-285"/>
</dbReference>
<dbReference type="PDB" id="2NQH">
    <property type="method" value="X-ray"/>
    <property type="resolution" value="1.10 A"/>
    <property type="chains" value="A=1-285"/>
</dbReference>
<dbReference type="PDB" id="2NQJ">
    <property type="method" value="X-ray"/>
    <property type="resolution" value="2.45 A"/>
    <property type="chains" value="A/B=1-285"/>
</dbReference>
<dbReference type="PDB" id="4K1G">
    <property type="method" value="X-ray"/>
    <property type="resolution" value="1.90 A"/>
    <property type="chains" value="A/B=1-285"/>
</dbReference>
<dbReference type="PDB" id="8RLY">
    <property type="method" value="X-ray"/>
    <property type="resolution" value="1.90 A"/>
    <property type="chains" value="A/B/C/D/E=1-285"/>
</dbReference>
<dbReference type="PDBsum" id="1QTW"/>
<dbReference type="PDBsum" id="1QUM"/>
<dbReference type="PDBsum" id="2NQ9"/>
<dbReference type="PDBsum" id="2NQH"/>
<dbReference type="PDBsum" id="2NQJ"/>
<dbReference type="PDBsum" id="4K1G"/>
<dbReference type="PDBsum" id="8RLY"/>
<dbReference type="SMR" id="P0A6C1"/>
<dbReference type="BioGRID" id="4261799">
    <property type="interactions" value="30"/>
</dbReference>
<dbReference type="DIP" id="DIP-47966N"/>
<dbReference type="FunCoup" id="P0A6C1">
    <property type="interactions" value="421"/>
</dbReference>
<dbReference type="IntAct" id="P0A6C1">
    <property type="interactions" value="10"/>
</dbReference>
<dbReference type="STRING" id="511145.b2159"/>
<dbReference type="ChEMBL" id="CHEMBL1293285"/>
<dbReference type="jPOST" id="P0A6C1"/>
<dbReference type="PaxDb" id="511145-b2159"/>
<dbReference type="EnsemblBacteria" id="AAC75220">
    <property type="protein sequence ID" value="AAC75220"/>
    <property type="gene ID" value="b2159"/>
</dbReference>
<dbReference type="GeneID" id="946669"/>
<dbReference type="KEGG" id="ecj:JW2146"/>
<dbReference type="KEGG" id="eco:b2159"/>
<dbReference type="KEGG" id="ecoc:C3026_12100"/>
<dbReference type="PATRIC" id="fig|1411691.4.peg.80"/>
<dbReference type="EchoBASE" id="EB0645"/>
<dbReference type="eggNOG" id="COG0648">
    <property type="taxonomic scope" value="Bacteria"/>
</dbReference>
<dbReference type="HOGENOM" id="CLU_025885_0_4_6"/>
<dbReference type="InParanoid" id="P0A6C1"/>
<dbReference type="OMA" id="HPGSHLR"/>
<dbReference type="OrthoDB" id="9805666at2"/>
<dbReference type="PhylomeDB" id="P0A6C1"/>
<dbReference type="BioCyc" id="EcoCyc:EG10651-MONOMER"/>
<dbReference type="BioCyc" id="MetaCyc:EG10651-MONOMER"/>
<dbReference type="BRENDA" id="3.1.21.2">
    <property type="organism ID" value="2026"/>
</dbReference>
<dbReference type="EvolutionaryTrace" id="P0A6C1"/>
<dbReference type="PRO" id="PR:P0A6C1"/>
<dbReference type="Proteomes" id="UP000000625">
    <property type="component" value="Chromosome"/>
</dbReference>
<dbReference type="GO" id="GO:0005829">
    <property type="term" value="C:cytosol"/>
    <property type="evidence" value="ECO:0000305"/>
    <property type="project" value="EcoCyc"/>
</dbReference>
<dbReference type="GO" id="GO:0008296">
    <property type="term" value="F:3'-5'-DNA exonuclease activity"/>
    <property type="evidence" value="ECO:0000314"/>
    <property type="project" value="EcoCyc"/>
</dbReference>
<dbReference type="GO" id="GO:0008833">
    <property type="term" value="F:deoxyribonuclease IV (phage-T4-induced) activity"/>
    <property type="evidence" value="ECO:0007669"/>
    <property type="project" value="UniProtKB-UniRule"/>
</dbReference>
<dbReference type="GO" id="GO:0003677">
    <property type="term" value="F:DNA binding"/>
    <property type="evidence" value="ECO:0007669"/>
    <property type="project" value="InterPro"/>
</dbReference>
<dbReference type="GO" id="GO:0003906">
    <property type="term" value="F:DNA-(apurinic or apyrimidinic site) endonuclease activity"/>
    <property type="evidence" value="ECO:0000314"/>
    <property type="project" value="EcoCyc"/>
</dbReference>
<dbReference type="GO" id="GO:0004519">
    <property type="term" value="F:endonuclease activity"/>
    <property type="evidence" value="ECO:0000314"/>
    <property type="project" value="EcoCyc"/>
</dbReference>
<dbReference type="GO" id="GO:0016791">
    <property type="term" value="F:phosphatase activity"/>
    <property type="evidence" value="ECO:0000314"/>
    <property type="project" value="EcoCyc"/>
</dbReference>
<dbReference type="GO" id="GO:0008081">
    <property type="term" value="F:phosphoric diester hydrolase activity"/>
    <property type="evidence" value="ECO:0000314"/>
    <property type="project" value="EcoCyc"/>
</dbReference>
<dbReference type="GO" id="GO:0008270">
    <property type="term" value="F:zinc ion binding"/>
    <property type="evidence" value="ECO:0000314"/>
    <property type="project" value="EcoCyc"/>
</dbReference>
<dbReference type="GO" id="GO:0006284">
    <property type="term" value="P:base-excision repair"/>
    <property type="evidence" value="ECO:0000318"/>
    <property type="project" value="GO_Central"/>
</dbReference>
<dbReference type="GO" id="GO:0006281">
    <property type="term" value="P:DNA repair"/>
    <property type="evidence" value="ECO:0000315"/>
    <property type="project" value="EcoCyc"/>
</dbReference>
<dbReference type="CDD" id="cd00019">
    <property type="entry name" value="AP2Ec"/>
    <property type="match status" value="1"/>
</dbReference>
<dbReference type="FunFam" id="3.20.20.150:FF:000001">
    <property type="entry name" value="Probable endonuclease 4"/>
    <property type="match status" value="1"/>
</dbReference>
<dbReference type="Gene3D" id="3.20.20.150">
    <property type="entry name" value="Divalent-metal-dependent TIM barrel enzymes"/>
    <property type="match status" value="1"/>
</dbReference>
<dbReference type="HAMAP" id="MF_00152">
    <property type="entry name" value="Nfo"/>
    <property type="match status" value="1"/>
</dbReference>
<dbReference type="InterPro" id="IPR001719">
    <property type="entry name" value="AP_endonuc_2"/>
</dbReference>
<dbReference type="InterPro" id="IPR018246">
    <property type="entry name" value="AP_endonuc_F2_Zn_BS"/>
</dbReference>
<dbReference type="InterPro" id="IPR036237">
    <property type="entry name" value="Xyl_isomerase-like_sf"/>
</dbReference>
<dbReference type="InterPro" id="IPR013022">
    <property type="entry name" value="Xyl_isomerase-like_TIM-brl"/>
</dbReference>
<dbReference type="NCBIfam" id="TIGR00587">
    <property type="entry name" value="nfo"/>
    <property type="match status" value="1"/>
</dbReference>
<dbReference type="NCBIfam" id="NF002199">
    <property type="entry name" value="PRK01060.1-4"/>
    <property type="match status" value="1"/>
</dbReference>
<dbReference type="PANTHER" id="PTHR21445:SF0">
    <property type="entry name" value="APURINIC-APYRIMIDINIC ENDONUCLEASE"/>
    <property type="match status" value="1"/>
</dbReference>
<dbReference type="PANTHER" id="PTHR21445">
    <property type="entry name" value="ENDONUCLEASE IV ENDODEOXYRIBONUCLEASE IV"/>
    <property type="match status" value="1"/>
</dbReference>
<dbReference type="Pfam" id="PF01261">
    <property type="entry name" value="AP_endonuc_2"/>
    <property type="match status" value="1"/>
</dbReference>
<dbReference type="SMART" id="SM00518">
    <property type="entry name" value="AP2Ec"/>
    <property type="match status" value="1"/>
</dbReference>
<dbReference type="SUPFAM" id="SSF51658">
    <property type="entry name" value="Xylose isomerase-like"/>
    <property type="match status" value="1"/>
</dbReference>
<dbReference type="PROSITE" id="PS00729">
    <property type="entry name" value="AP_NUCLEASE_F2_1"/>
    <property type="match status" value="1"/>
</dbReference>
<dbReference type="PROSITE" id="PS00730">
    <property type="entry name" value="AP_NUCLEASE_F2_2"/>
    <property type="match status" value="1"/>
</dbReference>
<dbReference type="PROSITE" id="PS00731">
    <property type="entry name" value="AP_NUCLEASE_F2_3"/>
    <property type="match status" value="1"/>
</dbReference>
<dbReference type="PROSITE" id="PS51432">
    <property type="entry name" value="AP_NUCLEASE_F2_4"/>
    <property type="match status" value="1"/>
</dbReference>